<gene>
    <name evidence="1" type="primary">rpsE</name>
    <name type="ordered locus">YPTB3681</name>
</gene>
<comment type="function">
    <text evidence="1">With S4 and S12 plays an important role in translational accuracy.</text>
</comment>
<comment type="function">
    <text evidence="1">Located at the back of the 30S subunit body where it stabilizes the conformation of the head with respect to the body.</text>
</comment>
<comment type="subunit">
    <text evidence="1">Part of the 30S ribosomal subunit. Contacts proteins S4 and S8.</text>
</comment>
<comment type="domain">
    <text>The N-terminal domain interacts with the head of the 30S subunit; the C-terminal domain interacts with the body and contacts protein S4. The interaction surface between S4 and S5 is involved in control of translational fidelity.</text>
</comment>
<comment type="similarity">
    <text evidence="1">Belongs to the universal ribosomal protein uS5 family.</text>
</comment>
<name>RS5_YERPS</name>
<sequence length="167" mass="17533">MSHIEKQAGELQEKLIAVNRVSKTVKGGRIFSFTALTVVGDGNGRVGFGYGKAREVPAAIQKAMEKARRAMINVALNNGTLQHPVKGAHTGSRVFMQPASEGTGIIAGGAMRAVLEVAGVHNVLAKAYGSTNPINVVRATIAALEDMKSPEMVAAKRGKSVEEILGK</sequence>
<keyword id="KW-0687">Ribonucleoprotein</keyword>
<keyword id="KW-0689">Ribosomal protein</keyword>
<keyword id="KW-0694">RNA-binding</keyword>
<keyword id="KW-0699">rRNA-binding</keyword>
<evidence type="ECO:0000255" key="1">
    <source>
        <dbReference type="HAMAP-Rule" id="MF_01307"/>
    </source>
</evidence>
<evidence type="ECO:0000305" key="2"/>
<protein>
    <recommendedName>
        <fullName evidence="1">Small ribosomal subunit protein uS5</fullName>
    </recommendedName>
    <alternativeName>
        <fullName evidence="2">30S ribosomal protein S5</fullName>
    </alternativeName>
</protein>
<reference key="1">
    <citation type="journal article" date="2004" name="Proc. Natl. Acad. Sci. U.S.A.">
        <title>Insights into the evolution of Yersinia pestis through whole-genome comparison with Yersinia pseudotuberculosis.</title>
        <authorList>
            <person name="Chain P.S.G."/>
            <person name="Carniel E."/>
            <person name="Larimer F.W."/>
            <person name="Lamerdin J."/>
            <person name="Stoutland P.O."/>
            <person name="Regala W.M."/>
            <person name="Georgescu A.M."/>
            <person name="Vergez L.M."/>
            <person name="Land M.L."/>
            <person name="Motin V.L."/>
            <person name="Brubaker R.R."/>
            <person name="Fowler J."/>
            <person name="Hinnebusch J."/>
            <person name="Marceau M."/>
            <person name="Medigue C."/>
            <person name="Simonet M."/>
            <person name="Chenal-Francisque V."/>
            <person name="Souza B."/>
            <person name="Dacheux D."/>
            <person name="Elliott J.M."/>
            <person name="Derbise A."/>
            <person name="Hauser L.J."/>
            <person name="Garcia E."/>
        </authorList>
    </citation>
    <scope>NUCLEOTIDE SEQUENCE [LARGE SCALE GENOMIC DNA]</scope>
    <source>
        <strain>IP32953</strain>
    </source>
</reference>
<organism>
    <name type="scientific">Yersinia pseudotuberculosis serotype I (strain IP32953)</name>
    <dbReference type="NCBI Taxonomy" id="273123"/>
    <lineage>
        <taxon>Bacteria</taxon>
        <taxon>Pseudomonadati</taxon>
        <taxon>Pseudomonadota</taxon>
        <taxon>Gammaproteobacteria</taxon>
        <taxon>Enterobacterales</taxon>
        <taxon>Yersiniaceae</taxon>
        <taxon>Yersinia</taxon>
    </lineage>
</organism>
<feature type="chain" id="PRO_0000131641" description="Small ribosomal subunit protein uS5">
    <location>
        <begin position="1"/>
        <end position="167"/>
    </location>
</feature>
<feature type="domain" description="S5 DRBM" evidence="1">
    <location>
        <begin position="11"/>
        <end position="74"/>
    </location>
</feature>
<accession>Q664T8</accession>
<proteinExistence type="inferred from homology"/>
<dbReference type="EMBL" id="BX936398">
    <property type="protein sequence ID" value="CAH22919.1"/>
    <property type="molecule type" value="Genomic_DNA"/>
</dbReference>
<dbReference type="RefSeq" id="WP_002213337.1">
    <property type="nucleotide sequence ID" value="NZ_CP009712.1"/>
</dbReference>
<dbReference type="SMR" id="Q664T8"/>
<dbReference type="GeneID" id="82552805"/>
<dbReference type="KEGG" id="ypo:BZ17_2906"/>
<dbReference type="KEGG" id="yps:YPTB3681"/>
<dbReference type="PATRIC" id="fig|273123.14.peg.3047"/>
<dbReference type="Proteomes" id="UP000001011">
    <property type="component" value="Chromosome"/>
</dbReference>
<dbReference type="GO" id="GO:0015935">
    <property type="term" value="C:small ribosomal subunit"/>
    <property type="evidence" value="ECO:0007669"/>
    <property type="project" value="InterPro"/>
</dbReference>
<dbReference type="GO" id="GO:0019843">
    <property type="term" value="F:rRNA binding"/>
    <property type="evidence" value="ECO:0007669"/>
    <property type="project" value="UniProtKB-UniRule"/>
</dbReference>
<dbReference type="GO" id="GO:0003735">
    <property type="term" value="F:structural constituent of ribosome"/>
    <property type="evidence" value="ECO:0007669"/>
    <property type="project" value="InterPro"/>
</dbReference>
<dbReference type="GO" id="GO:0006412">
    <property type="term" value="P:translation"/>
    <property type="evidence" value="ECO:0007669"/>
    <property type="project" value="UniProtKB-UniRule"/>
</dbReference>
<dbReference type="FunFam" id="3.30.160.20:FF:000001">
    <property type="entry name" value="30S ribosomal protein S5"/>
    <property type="match status" value="1"/>
</dbReference>
<dbReference type="FunFam" id="3.30.230.10:FF:000002">
    <property type="entry name" value="30S ribosomal protein S5"/>
    <property type="match status" value="1"/>
</dbReference>
<dbReference type="Gene3D" id="3.30.160.20">
    <property type="match status" value="1"/>
</dbReference>
<dbReference type="Gene3D" id="3.30.230.10">
    <property type="match status" value="1"/>
</dbReference>
<dbReference type="HAMAP" id="MF_01307_B">
    <property type="entry name" value="Ribosomal_uS5_B"/>
    <property type="match status" value="1"/>
</dbReference>
<dbReference type="InterPro" id="IPR020568">
    <property type="entry name" value="Ribosomal_Su5_D2-typ_SF"/>
</dbReference>
<dbReference type="InterPro" id="IPR000851">
    <property type="entry name" value="Ribosomal_uS5"/>
</dbReference>
<dbReference type="InterPro" id="IPR005712">
    <property type="entry name" value="Ribosomal_uS5_bac-type"/>
</dbReference>
<dbReference type="InterPro" id="IPR005324">
    <property type="entry name" value="Ribosomal_uS5_C"/>
</dbReference>
<dbReference type="InterPro" id="IPR013810">
    <property type="entry name" value="Ribosomal_uS5_N"/>
</dbReference>
<dbReference type="InterPro" id="IPR018192">
    <property type="entry name" value="Ribosomal_uS5_N_CS"/>
</dbReference>
<dbReference type="InterPro" id="IPR014721">
    <property type="entry name" value="Ribsml_uS5_D2-typ_fold_subgr"/>
</dbReference>
<dbReference type="NCBIfam" id="TIGR01021">
    <property type="entry name" value="rpsE_bact"/>
    <property type="match status" value="1"/>
</dbReference>
<dbReference type="PANTHER" id="PTHR48277">
    <property type="entry name" value="MITOCHONDRIAL RIBOSOMAL PROTEIN S5"/>
    <property type="match status" value="1"/>
</dbReference>
<dbReference type="PANTHER" id="PTHR48277:SF1">
    <property type="entry name" value="MITOCHONDRIAL RIBOSOMAL PROTEIN S5"/>
    <property type="match status" value="1"/>
</dbReference>
<dbReference type="Pfam" id="PF00333">
    <property type="entry name" value="Ribosomal_S5"/>
    <property type="match status" value="1"/>
</dbReference>
<dbReference type="Pfam" id="PF03719">
    <property type="entry name" value="Ribosomal_S5_C"/>
    <property type="match status" value="1"/>
</dbReference>
<dbReference type="SUPFAM" id="SSF54768">
    <property type="entry name" value="dsRNA-binding domain-like"/>
    <property type="match status" value="1"/>
</dbReference>
<dbReference type="SUPFAM" id="SSF54211">
    <property type="entry name" value="Ribosomal protein S5 domain 2-like"/>
    <property type="match status" value="1"/>
</dbReference>
<dbReference type="PROSITE" id="PS00585">
    <property type="entry name" value="RIBOSOMAL_S5"/>
    <property type="match status" value="1"/>
</dbReference>
<dbReference type="PROSITE" id="PS50881">
    <property type="entry name" value="S5_DSRBD"/>
    <property type="match status" value="1"/>
</dbReference>